<evidence type="ECO:0000255" key="1">
    <source>
        <dbReference type="HAMAP-Rule" id="MF_04086"/>
    </source>
</evidence>
<evidence type="ECO:0000256" key="2">
    <source>
        <dbReference type="SAM" id="MobiDB-lite"/>
    </source>
</evidence>
<sequence>MQDPLLGTLSELKDLVRKTIPDVIELAYQKDALLSQVHPRSVLIEGFKLLSLLVELESCKVNACHHNYEQKFIDVILSDGGILCPTLPKVVPDGYNLMGKTLILLETFVRVNPDDFEKKWKADMSKLISLKTDLGKIGVTLVPVVDGRSNYNTSFVSDWTTERLRWLLIEVLKGMKTTSELEIEEQEYHRLIHSLAKTNNQSLGFENLECLKRNMLSYDQLLDSSLLVGVKNDVKESKVMEELIRLKIWYKSEVYEKGLGKFVKTDKKVLLSQLITLGSHEENDSLDCAFCSSRILELCFKLSVKMHEDVLTRGLNLDGTKTLHSSVQSYLNVLSMCNKIKGSKIFNTRRNTLLFLDLIMLNFVVDEMVKDSTVIRNLKNAGLIVGQMILLVNDRVLDILTANKLIRQKLTTNEKWLSICSSVLKRYDLELWEKLCYLIRVPDFNELFQLAKELVSDRPMMRYSVHKAEERQCCHKAMENFTDDDFKIMLKALSHLSLGLINSMKTSFSSRLLINERDYSRYFGNVRLRECYIQRFPITNNIIGLLFYQKTGERSRCYSLYIAENGELTEIGSFYCDPKRYFVPIFSEAVITSMCEEMINWLNFDSELVRIVSTQLKTLMLLLLCSPSKRNQTFLQGLRYFIMAYVNQAHHIDLMSKLAVECKSSSEIQLQRLCVRLFVSILSGDNEIEYGFTRRFKFLLNISYLCHFITKETPDRLTDQIKCFEKFLEPKLKFNSVIVNPSLNGTLTESQEHQMISSIDRFFSKELLDQSDVKEPGVSRELLGYCVSLFNRGKLRVSGDLKVDPFRPTFTSTALDISSNKSVVVPKLDELGNIVDKYNKQLMVSSCVTSLVEMFKTKGRYNLDPDSIDFLVLKNLTNLVSANVPQEKSQEELSTLYEALTEDQISAFEQVRDEVQLALHKMKSSDAREERLQDPKRNEKNASKGKILESLWSPHQVNRAIKNETSIHEIKDFDPDILDSHLVEKLCHEVYNSSQKSLFFLDEPLKSVPLEMLLINLTTIAYEEEEFFECFKYLLIQGDFDQKLGTYEHKSRSRLGLSSEALKVQENARVSTRESNAEAIAKKLDRTFFTSAALRNLCFYSEDSPTEFTSVSTNTGNLKFGLSYKEQVGSNRELYVGDLNTKLMTRLVEDFSEVVTGSMRFSCLNSEKEFERAICDMKMAVNNGDFSLSMDHSKWGPHMSPALFFTFLANLNLTEPKSRTRLNLDPLLNILKWHLHKTVEVPFNVAQAYCIGKLKRSLGLMECQCSSLTEEFYHSYLQIQDEIPSHIMSVLDMGQGILHNLSDLYALITEQFLNYVIHKLFDIDVTSYTSSDDQISIMKLPLSTKENDEDFDWLEIICFHEYLSSKLNKFVSPKSVVGNFVAEFKSRFFVMGEETPLLTKFVAAALHNVKCKTPTQLAETIDTICDQCVANGVGVDIVSRISERVNRLISYSGYKETPFLTIVNQDVKDWTDGSRGYRLQRNIENSFGNQELLRLIRRGARKVFLEIKKGHVFEENLIGLIGRGGDEALRGFLLYAGFAENDIVEALRHKWLNPSTFGDLRLVLRTKIMSSKRILERESVPSLIKTLQSRMSKNFIKGAKKILAESINKSAFQSSVASGFIGFCKSMGSKCVRDGKGGFMYLKELYNNVNKCGCCICLEWPGVVYCQDSLAKISQFARSILWDYFTLVLTNACEIGEWVFSDVKSPSAPPILSNPNLFWAVKPKIQKHIEDRLSLNHILHSIKRNYPYLFEEHLAPFMSDLQFNQMMNPSHVKFLDVCIALDMMNENLGIIGHLLRGRNHFIYIVKQSECASAHIRQSDYVDHELGLSPQQVCYNFKVQFLFSSMIDPLIVSTSTLKTFFWFNEVLSIEEEDQIDLGELTDFTLFIKTGHLNRAMTADDITMGYVCSNLAEEIITLNSYGSFQEFRSNHPSKNDLSDILKTLTSESIKLTLDIQIVHMRNSTKYNISRKIVYTLKALCALPLEDCFTKDPVALVESLELFASGVNGGHLQLDGVTMVSVLPLLRGKKAVNLAQILMDNDLAATNDHNVMESVTLDFTKFHDELGDKFCYSLVGPEDQGNPIVLHNGMFMIDNQKLSYLKVEIFGDTIIKALGALDSPREIGSLLHGLWPYLKATKQIINFDQTDFEMIYDLHRVVLLESIAQFGDWVEFASFKVAFSKHYKDIVVADNLGNLRLKGVTCRLFRQQQSVEDIE</sequence>
<organism>
    <name type="scientific">Sabia mammarenavirus (isolate Human/Brasil/SPH114202/1990)</name>
    <name type="common">SABV</name>
    <name type="synonym">Sabi mammarenavirus</name>
    <dbReference type="NCBI Taxonomy" id="3052299"/>
    <lineage>
        <taxon>Viruses</taxon>
        <taxon>Riboviria</taxon>
        <taxon>Orthornavirae</taxon>
        <taxon>Negarnaviricota</taxon>
        <taxon>Polyploviricotina</taxon>
        <taxon>Ellioviricetes</taxon>
        <taxon>Bunyavirales</taxon>
        <taxon>Arenaviridae</taxon>
        <taxon>Mammarenavirus</taxon>
    </lineage>
</organism>
<organismHost>
    <name type="scientific">Homo sapiens</name>
    <name type="common">Human</name>
    <dbReference type="NCBI Taxonomy" id="9606"/>
</organismHost>
<protein>
    <recommendedName>
        <fullName evidence="1">RNA-directed RNA polymerase L</fullName>
        <shortName evidence="1">Protein L</shortName>
        <ecNumber evidence="1">2.7.7.48</ecNumber>
    </recommendedName>
    <alternativeName>
        <fullName evidence="1">Large structural protein</fullName>
    </alternativeName>
    <alternativeName>
        <fullName evidence="1">Replicase</fullName>
    </alternativeName>
    <alternativeName>
        <fullName evidence="1">Transcriptase</fullName>
    </alternativeName>
    <domain>
        <recommendedName>
            <fullName evidence="1">cap-snatching endonuclease</fullName>
            <ecNumber evidence="1">3.1.-.-</ecNumber>
        </recommendedName>
    </domain>
</protein>
<feature type="chain" id="PRO_0000361646" description="RNA-directed RNA polymerase L">
    <location>
        <begin position="1"/>
        <end position="2212"/>
    </location>
</feature>
<feature type="domain" description="RdRp catalytic" evidence="1">
    <location>
        <begin position="1175"/>
        <end position="1371"/>
    </location>
</feature>
<feature type="region of interest" description="Endonuclease" evidence="1">
    <location>
        <begin position="30"/>
        <end position="288"/>
    </location>
</feature>
<feature type="region of interest" description="Disordered" evidence="2">
    <location>
        <begin position="922"/>
        <end position="942"/>
    </location>
</feature>
<feature type="compositionally biased region" description="Basic and acidic residues" evidence="2">
    <location>
        <begin position="923"/>
        <end position="942"/>
    </location>
</feature>
<feature type="active site" evidence="1">
    <location>
        <position position="119"/>
    </location>
</feature>
<feature type="binding site" evidence="1">
    <location>
        <position position="55"/>
    </location>
    <ligand>
        <name>Mn(2+)</name>
        <dbReference type="ChEBI" id="CHEBI:29035"/>
        <label>1</label>
    </ligand>
</feature>
<feature type="binding site" evidence="1">
    <location>
        <position position="93"/>
    </location>
    <ligand>
        <name>Mn(2+)</name>
        <dbReference type="ChEBI" id="CHEBI:29035"/>
        <label>1</label>
    </ligand>
</feature>
<feature type="binding site" evidence="1">
    <location>
        <position position="93"/>
    </location>
    <ligand>
        <name>Mn(2+)</name>
        <dbReference type="ChEBI" id="CHEBI:29035"/>
        <label>2</label>
    </ligand>
</feature>
<feature type="binding site" evidence="1">
    <location>
        <position position="106"/>
    </location>
    <ligand>
        <name>Mn(2+)</name>
        <dbReference type="ChEBI" id="CHEBI:29035"/>
        <label>1</label>
    </ligand>
</feature>
<feature type="binding site" evidence="1">
    <location>
        <position position="1333"/>
    </location>
    <ligand>
        <name>Mg(2+)</name>
        <dbReference type="ChEBI" id="CHEBI:18420"/>
        <note>catalytic; for RdRp activity</note>
    </ligand>
</feature>
<feature type="sequence variant">
    <original>T</original>
    <variation>A</variation>
    <location>
        <position position="965"/>
    </location>
</feature>
<comment type="function">
    <text evidence="1">RNA-dependent RNA polymerase, which is responsible for the replication and transcription of the viral RNA genome using antigenomic RNA as an intermediate. During transcription, synthesizes subgenomic RNAs and assures their capping by a cap-snatching mechanism, which involves the endonuclease activity cleaving the host capped pre-mRNAs. These short capped RNAs are then used as primers for viral transcription. The 3'-end of subgenomic mRNAs molecules are heterogeneous and not polyadenylated. The replicase function is to direct synthesis of antigenomic and genomic RNA which are encapsidated and non capped. As a consequence of the use of the same enzyme for both transcription and replication, these mechanisms need to be well coordinated. These processes may be regulated by proteins N and Z in a dose-dependent manner. Z protein inhibits the viral polymerase L und thus the viral transcription and RNA synthesis.</text>
</comment>
<comment type="catalytic activity">
    <reaction evidence="1">
        <text>RNA(n) + a ribonucleoside 5'-triphosphate = RNA(n+1) + diphosphate</text>
        <dbReference type="Rhea" id="RHEA:21248"/>
        <dbReference type="Rhea" id="RHEA-COMP:14527"/>
        <dbReference type="Rhea" id="RHEA-COMP:17342"/>
        <dbReference type="ChEBI" id="CHEBI:33019"/>
        <dbReference type="ChEBI" id="CHEBI:61557"/>
        <dbReference type="ChEBI" id="CHEBI:140395"/>
        <dbReference type="EC" id="2.7.7.48"/>
    </reaction>
</comment>
<comment type="cofactor">
    <cofactor evidence="1">
        <name>Mn(2+)</name>
        <dbReference type="ChEBI" id="CHEBI:29035"/>
    </cofactor>
    <text evidence="1">For endonuclease activity. Binds 2 Mn(2+) ions in the active site. The divalent metal ions are crucial for catalytic activity.</text>
</comment>
<comment type="cofactor">
    <cofactor evidence="1">
        <name>Mg(2+)</name>
        <dbReference type="ChEBI" id="CHEBI:18420"/>
    </cofactor>
    <cofactor evidence="1">
        <name>Mn(2+)</name>
        <dbReference type="ChEBI" id="CHEBI:29035"/>
    </cofactor>
    <text evidence="1">For polymerase activity.</text>
</comment>
<comment type="subunit">
    <text evidence="1">Homomultimer; the oligomeric structure is essential for the polymerase activity. Interacts with nucleoprotein N. Interacts with protein Z; this interaction inhibits viral transcription and replication, Z partially blocks the product exit tunnel for the releasing nascent RNA product.</text>
</comment>
<comment type="subcellular location">
    <subcellularLocation>
        <location evidence="1">Virion</location>
    </subcellularLocation>
    <subcellularLocation>
        <location evidence="1">Host cytoplasm</location>
    </subcellularLocation>
</comment>
<comment type="domain">
    <text evidence="1">The N-terminus contains the endonuclease activity (endoN). The central region contains the RdRp activity.</text>
</comment>
<comment type="miscellaneous">
    <text evidence="1">Classified as His(-) endonuclease since it does not have a histidine upstream of the active site that coordinates the first cation. His(-) endonucleases display very low activity in vitro, although they are clearly active in vivo.</text>
</comment>
<comment type="similarity">
    <text evidence="1">Belongs to the Bunyavirales RNA polymerase family.</text>
</comment>
<name>L_SABVB</name>
<dbReference type="EC" id="2.7.7.48" evidence="1"/>
<dbReference type="EC" id="3.1.-.-" evidence="1"/>
<dbReference type="EMBL" id="AY358026">
    <property type="protein sequence ID" value="AAQ55263.1"/>
    <property type="molecule type" value="Genomic_RNA"/>
</dbReference>
<dbReference type="EMBL" id="AY216506">
    <property type="protein sequence ID" value="AAP44542.2"/>
    <property type="molecule type" value="Genomic_RNA"/>
</dbReference>
<dbReference type="RefSeq" id="YP_089660.1">
    <property type="nucleotide sequence ID" value="NC_006313.1"/>
</dbReference>
<dbReference type="SMR" id="Q6UY61"/>
<dbReference type="KEGG" id="vg:3077250"/>
<dbReference type="Proteomes" id="UP000009267">
    <property type="component" value="Genome"/>
</dbReference>
<dbReference type="GO" id="GO:0030430">
    <property type="term" value="C:host cell cytoplasm"/>
    <property type="evidence" value="ECO:0007669"/>
    <property type="project" value="UniProtKB-SubCell"/>
</dbReference>
<dbReference type="GO" id="GO:0044423">
    <property type="term" value="C:virion component"/>
    <property type="evidence" value="ECO:0007669"/>
    <property type="project" value="UniProtKB-KW"/>
</dbReference>
<dbReference type="GO" id="GO:0016787">
    <property type="term" value="F:hydrolase activity"/>
    <property type="evidence" value="ECO:0007669"/>
    <property type="project" value="UniProtKB-KW"/>
</dbReference>
<dbReference type="GO" id="GO:0046872">
    <property type="term" value="F:metal ion binding"/>
    <property type="evidence" value="ECO:0007669"/>
    <property type="project" value="UniProtKB-KW"/>
</dbReference>
<dbReference type="GO" id="GO:0000166">
    <property type="term" value="F:nucleotide binding"/>
    <property type="evidence" value="ECO:0007669"/>
    <property type="project" value="UniProtKB-UniRule"/>
</dbReference>
<dbReference type="GO" id="GO:0003968">
    <property type="term" value="F:RNA-directed RNA polymerase activity"/>
    <property type="evidence" value="ECO:0007669"/>
    <property type="project" value="UniProtKB-UniRule"/>
</dbReference>
<dbReference type="GO" id="GO:0075526">
    <property type="term" value="P:cap snatching"/>
    <property type="evidence" value="ECO:0007669"/>
    <property type="project" value="UniProtKB-UniRule"/>
</dbReference>
<dbReference type="GO" id="GO:0039689">
    <property type="term" value="P:negative stranded viral RNA replication"/>
    <property type="evidence" value="ECO:0000250"/>
    <property type="project" value="UniProtKB"/>
</dbReference>
<dbReference type="GO" id="GO:0039696">
    <property type="term" value="P:RNA-templated viral transcription"/>
    <property type="evidence" value="ECO:0000250"/>
    <property type="project" value="UniProtKB"/>
</dbReference>
<dbReference type="FunFam" id="3.30.70.2640:FF:000001">
    <property type="entry name" value="RNA-directed RNA polymerase L"/>
    <property type="match status" value="1"/>
</dbReference>
<dbReference type="Gene3D" id="3.30.70.2640">
    <property type="entry name" value="Arenavirus RNA polymerase"/>
    <property type="match status" value="1"/>
</dbReference>
<dbReference type="Gene3D" id="1.20.1440.300">
    <property type="entry name" value="RNA-directed RNA polymerase L, helical domain"/>
    <property type="match status" value="1"/>
</dbReference>
<dbReference type="HAMAP" id="MF_04086">
    <property type="entry name" value="ARENA_L"/>
    <property type="match status" value="1"/>
</dbReference>
<dbReference type="InterPro" id="IPR026382">
    <property type="entry name" value="CapSnatch_arenavir"/>
</dbReference>
<dbReference type="InterPro" id="IPR048006">
    <property type="entry name" value="CapSnatch_bunyavir"/>
</dbReference>
<dbReference type="InterPro" id="IPR007099">
    <property type="entry name" value="RNA-dir_pol_NSvirus"/>
</dbReference>
<dbReference type="InterPro" id="IPR010453">
    <property type="entry name" value="RNA_pol_arenavir"/>
</dbReference>
<dbReference type="NCBIfam" id="TIGR04202">
    <property type="entry name" value="capSnatchArena"/>
    <property type="match status" value="1"/>
</dbReference>
<dbReference type="Pfam" id="PF06317">
    <property type="entry name" value="Arena_RNA_pol"/>
    <property type="match status" value="1"/>
</dbReference>
<dbReference type="Pfam" id="PF17296">
    <property type="entry name" value="ArenaCapSnatch"/>
    <property type="match status" value="1"/>
</dbReference>
<dbReference type="PIRSF" id="PIRSF000836">
    <property type="entry name" value="L_ArenaV"/>
    <property type="match status" value="1"/>
</dbReference>
<dbReference type="PROSITE" id="PS50525">
    <property type="entry name" value="RDRP_SSRNA_NEG_SEG"/>
    <property type="match status" value="1"/>
</dbReference>
<accession>Q6UY61</accession>
<accession>Q6XQI5</accession>
<reference key="1">
    <citation type="submission" date="2003-08" db="EMBL/GenBank/DDBJ databases">
        <authorList>
            <person name="Bowen M.D."/>
            <person name="Thurman K."/>
            <person name="Minor E."/>
            <person name="Meyer R.F."/>
            <person name="Malfatti S.A."/>
            <person name="Do L.H."/>
            <person name="Smith K.L."/>
            <person name="McCready P.M."/>
            <person name="Chain P.S.G."/>
        </authorList>
    </citation>
    <scope>NUCLEOTIDE SEQUENCE [GENOMIC RNA]</scope>
</reference>
<reference key="2">
    <citation type="journal article" date="2003" name="Virology">
        <title>New insights into the evolutionary relationships between arenaviruses provided by comparative analysis of small and large segment sequences.</title>
        <authorList>
            <person name="Charrel R.N."/>
            <person name="Lemasson J.J."/>
            <person name="Garbutt M."/>
            <person name="Khelifa R."/>
            <person name="De Micco P."/>
            <person name="Feldmann H."/>
            <person name="de Lamballerie X."/>
        </authorList>
    </citation>
    <scope>NUCLEOTIDE SEQUENCE [GENOMIC RNA]</scope>
</reference>
<reference key="3">
    <citation type="journal article" date="2008" name="Curr. Opin. Microbiol.">
        <title>Phylogeny of the genus Arenavirus.</title>
        <authorList>
            <person name="Charrel R.N."/>
            <person name="de Lamballerie X."/>
            <person name="Emonet S."/>
        </authorList>
    </citation>
    <scope>NUCLEOTIDE SEQUENCE [GENOMIC RNA]</scope>
</reference>
<reference key="4">
    <citation type="journal article" date="2017" name="Crit. Rev. Microbiol.">
        <title>Bunyaviridae RdRps: structure, motifs, and RNA synthesis machinery.</title>
        <authorList>
            <person name="Amroun A."/>
            <person name="Priet S."/>
            <person name="de Lamballerie X."/>
            <person name="Querat G."/>
        </authorList>
    </citation>
    <scope>REVIEW</scope>
</reference>
<reference key="5">
    <citation type="journal article" date="2020" name="Trends Microbiol.">
        <title>The Cap-Snatching Mechanism of Bunyaviruses.</title>
        <authorList>
            <person name="Olschewski S."/>
            <person name="Cusack S."/>
            <person name="Rosenthal M."/>
        </authorList>
    </citation>
    <scope>REVIEW</scope>
</reference>
<keyword id="KW-1157">Cap snatching</keyword>
<keyword id="KW-1035">Host cytoplasm</keyword>
<keyword id="KW-0378">Hydrolase</keyword>
<keyword id="KW-0460">Magnesium</keyword>
<keyword id="KW-0464">Manganese</keyword>
<keyword id="KW-0479">Metal-binding</keyword>
<keyword id="KW-0547">Nucleotide-binding</keyword>
<keyword id="KW-0548">Nucleotidyltransferase</keyword>
<keyword id="KW-0696">RNA-directed RNA polymerase</keyword>
<keyword id="KW-0808">Transferase</keyword>
<keyword id="KW-0693">Viral RNA replication</keyword>
<keyword id="KW-0946">Virion</keyword>
<proteinExistence type="inferred from homology"/>
<gene>
    <name evidence="1" type="primary">L</name>
</gene>